<name>SCPB_LISMH</name>
<reference key="1">
    <citation type="journal article" date="2011" name="J. Bacteriol.">
        <title>Genome sequence of lineage III Listeria monocytogenes strain HCC23.</title>
        <authorList>
            <person name="Steele C.L."/>
            <person name="Donaldson J.R."/>
            <person name="Paul D."/>
            <person name="Banes M.M."/>
            <person name="Arick T."/>
            <person name="Bridges S.M."/>
            <person name="Lawrence M.L."/>
        </authorList>
    </citation>
    <scope>NUCLEOTIDE SEQUENCE [LARGE SCALE GENOMIC DNA]</scope>
    <source>
        <strain>HCC23</strain>
    </source>
</reference>
<protein>
    <recommendedName>
        <fullName evidence="1">Segregation and condensation protein B</fullName>
    </recommendedName>
</protein>
<comment type="function">
    <text evidence="1">Participates in chromosomal partition during cell division. May act via the formation of a condensin-like complex containing Smc and ScpA that pull DNA away from mid-cell into both cell halves.</text>
</comment>
<comment type="subunit">
    <text evidence="1">Homodimer. Homodimerization may be required to stabilize the binding of ScpA to the Smc head domains. Component of a cohesin-like complex composed of ScpA, ScpB and the Smc homodimer, in which ScpA and ScpB bind to the head domain of Smc. The presence of the three proteins is required for the association of the complex with DNA.</text>
</comment>
<comment type="subcellular location">
    <subcellularLocation>
        <location evidence="1">Cytoplasm</location>
    </subcellularLocation>
    <text evidence="1">Associated with two foci at the outer edges of the nucleoid region in young cells, and at four foci within both cell halves in older cells.</text>
</comment>
<comment type="similarity">
    <text evidence="1">Belongs to the ScpB family.</text>
</comment>
<dbReference type="EMBL" id="CP001175">
    <property type="protein sequence ID" value="ACK38962.1"/>
    <property type="molecule type" value="Genomic_DNA"/>
</dbReference>
<dbReference type="RefSeq" id="WP_003728772.1">
    <property type="nucleotide sequence ID" value="NC_011660.1"/>
</dbReference>
<dbReference type="SMR" id="B8DBX6"/>
<dbReference type="KEGG" id="lmh:LMHCC_0606"/>
<dbReference type="HOGENOM" id="CLU_045647_5_3_9"/>
<dbReference type="GO" id="GO:0005737">
    <property type="term" value="C:cytoplasm"/>
    <property type="evidence" value="ECO:0007669"/>
    <property type="project" value="UniProtKB-SubCell"/>
</dbReference>
<dbReference type="GO" id="GO:0051301">
    <property type="term" value="P:cell division"/>
    <property type="evidence" value="ECO:0007669"/>
    <property type="project" value="UniProtKB-KW"/>
</dbReference>
<dbReference type="GO" id="GO:0051304">
    <property type="term" value="P:chromosome separation"/>
    <property type="evidence" value="ECO:0007669"/>
    <property type="project" value="InterPro"/>
</dbReference>
<dbReference type="GO" id="GO:0006260">
    <property type="term" value="P:DNA replication"/>
    <property type="evidence" value="ECO:0007669"/>
    <property type="project" value="UniProtKB-UniRule"/>
</dbReference>
<dbReference type="Gene3D" id="1.10.10.10">
    <property type="entry name" value="Winged helix-like DNA-binding domain superfamily/Winged helix DNA-binding domain"/>
    <property type="match status" value="2"/>
</dbReference>
<dbReference type="HAMAP" id="MF_01804">
    <property type="entry name" value="ScpB"/>
    <property type="match status" value="1"/>
</dbReference>
<dbReference type="InterPro" id="IPR005234">
    <property type="entry name" value="ScpB_csome_segregation"/>
</dbReference>
<dbReference type="InterPro" id="IPR036388">
    <property type="entry name" value="WH-like_DNA-bd_sf"/>
</dbReference>
<dbReference type="InterPro" id="IPR036390">
    <property type="entry name" value="WH_DNA-bd_sf"/>
</dbReference>
<dbReference type="NCBIfam" id="TIGR00281">
    <property type="entry name" value="SMC-Scp complex subunit ScpB"/>
    <property type="match status" value="1"/>
</dbReference>
<dbReference type="PANTHER" id="PTHR34298">
    <property type="entry name" value="SEGREGATION AND CONDENSATION PROTEIN B"/>
    <property type="match status" value="1"/>
</dbReference>
<dbReference type="PANTHER" id="PTHR34298:SF2">
    <property type="entry name" value="SEGREGATION AND CONDENSATION PROTEIN B"/>
    <property type="match status" value="1"/>
</dbReference>
<dbReference type="Pfam" id="PF04079">
    <property type="entry name" value="SMC_ScpB"/>
    <property type="match status" value="1"/>
</dbReference>
<dbReference type="PIRSF" id="PIRSF019345">
    <property type="entry name" value="ScpB"/>
    <property type="match status" value="1"/>
</dbReference>
<dbReference type="SUPFAM" id="SSF46785">
    <property type="entry name" value="Winged helix' DNA-binding domain"/>
    <property type="match status" value="2"/>
</dbReference>
<proteinExistence type="inferred from homology"/>
<organism>
    <name type="scientific">Listeria monocytogenes serotype 4a (strain HCC23)</name>
    <dbReference type="NCBI Taxonomy" id="552536"/>
    <lineage>
        <taxon>Bacteria</taxon>
        <taxon>Bacillati</taxon>
        <taxon>Bacillota</taxon>
        <taxon>Bacilli</taxon>
        <taxon>Bacillales</taxon>
        <taxon>Listeriaceae</taxon>
        <taxon>Listeria</taxon>
    </lineage>
</organism>
<keyword id="KW-0131">Cell cycle</keyword>
<keyword id="KW-0132">Cell division</keyword>
<keyword id="KW-0159">Chromosome partition</keyword>
<keyword id="KW-0963">Cytoplasm</keyword>
<gene>
    <name evidence="1" type="primary">scpB</name>
    <name type="ordered locus">LMHCC_0606</name>
</gene>
<sequence length="198" mass="21898">MNREEQLGILESLLFAAGDAGLSTEQLTEVMEITHIEALNLLELLSERYNGSADRGLILLELAGTFQLATKKAHADYLRKLVEVPSNTVLSQASLETLAIIAYRQPVTRMEVDEVRGVQTDGPIRTLVAKGLVTDKGRVDGAGRAKLYVTTSEFLDAFGLNSLEDLPKLADPAAEEPDQNEMDLFFDRFNQSKEQEEE</sequence>
<accession>B8DBX6</accession>
<evidence type="ECO:0000255" key="1">
    <source>
        <dbReference type="HAMAP-Rule" id="MF_01804"/>
    </source>
</evidence>
<evidence type="ECO:0000256" key="2">
    <source>
        <dbReference type="SAM" id="MobiDB-lite"/>
    </source>
</evidence>
<feature type="chain" id="PRO_1000187537" description="Segregation and condensation protein B">
    <location>
        <begin position="1"/>
        <end position="198"/>
    </location>
</feature>
<feature type="region of interest" description="Disordered" evidence="2">
    <location>
        <begin position="169"/>
        <end position="198"/>
    </location>
</feature>